<evidence type="ECO:0000250" key="1">
    <source>
        <dbReference type="UniProtKB" id="Q8I4X0"/>
    </source>
</evidence>
<evidence type="ECO:0000269" key="2">
    <source>
    </source>
</evidence>
<evidence type="ECO:0000269" key="3">
    <source>
    </source>
</evidence>
<evidence type="ECO:0000269" key="4">
    <source>
    </source>
</evidence>
<evidence type="ECO:0000269" key="5">
    <source>
    </source>
</evidence>
<evidence type="ECO:0000303" key="6">
    <source>
    </source>
</evidence>
<evidence type="ECO:0000303" key="7">
    <source>
    </source>
</evidence>
<evidence type="ECO:0000303" key="8">
    <source>
    </source>
</evidence>
<evidence type="ECO:0000305" key="9"/>
<evidence type="ECO:0007829" key="10">
    <source>
        <dbReference type="PDB" id="8TRM"/>
    </source>
</evidence>
<evidence type="ECO:0007829" key="11">
    <source>
        <dbReference type="PDB" id="8TRN"/>
    </source>
</evidence>
<organism>
    <name type="scientific">Toxoplasma gondii</name>
    <dbReference type="NCBI Taxonomy" id="5811"/>
    <lineage>
        <taxon>Eukaryota</taxon>
        <taxon>Sar</taxon>
        <taxon>Alveolata</taxon>
        <taxon>Apicomplexa</taxon>
        <taxon>Conoidasida</taxon>
        <taxon>Coccidia</taxon>
        <taxon>Eucoccidiorida</taxon>
        <taxon>Eimeriorina</taxon>
        <taxon>Sarcocystidae</taxon>
        <taxon>Toxoplasma</taxon>
    </lineage>
</organism>
<proteinExistence type="evidence at protein level"/>
<name>ACT_TOXGO</name>
<comment type="function">
    <text>Actins are highly conserved proteins that are involved in various types of cell motility and are ubiquitously expressed in all eukaryotic cells.</text>
</comment>
<comment type="catalytic activity">
    <reaction evidence="1">
        <text>ATP + H2O = ADP + phosphate + H(+)</text>
        <dbReference type="Rhea" id="RHEA:13065"/>
        <dbReference type="ChEBI" id="CHEBI:15377"/>
        <dbReference type="ChEBI" id="CHEBI:15378"/>
        <dbReference type="ChEBI" id="CHEBI:30616"/>
        <dbReference type="ChEBI" id="CHEBI:43474"/>
        <dbReference type="ChEBI" id="CHEBI:456216"/>
    </reaction>
</comment>
<comment type="subunit">
    <text evidence="2 3 4 5">Component of a complex, at least composed of ald-1, microneme protein MIC2 and ACT1 (PubMed:12718875). Interacts (G-actin) with ADF; the interaction results in inhibition of actin polymerization (PubMed:20042603, PubMed:9274866). Interacts (F-actin) with ald-1 (PubMed:19380114).</text>
</comment>
<comment type="subcellular location">
    <subcellularLocation>
        <location>Cytoplasm</location>
        <location>Cytoskeleton</location>
    </subcellularLocation>
</comment>
<comment type="similarity">
    <text evidence="9">Belongs to the actin family.</text>
</comment>
<protein>
    <recommendedName>
        <fullName>Actin</fullName>
        <ecNumber evidence="1">3.6.4.-</ecNumber>
    </recommendedName>
</protein>
<gene>
    <name type="primary">ACT1</name>
</gene>
<sequence length="376" mass="41908">MADEEVQALVVDNGSGNVKAGVAGDDAPRAVFPSIVGKPKNPGIMVGMEEKDCYVGDEAQSKRGILTLKYPIEHGIVTNWDDMEKIWHHTFYNELRVAPEEHPVLLTEAPLNPKANRERMTQIMFETFNVPAMYVAIQAVLSLYSSGRTTGIVLDSGDGVSHTVPIYEGYALPHAIMRLDLAGRDLTEYMMKILHERGYGFTTSAEKEIVRDIKEKLCYIALDFDEEMKAAEDSSDIEKSYELPDGNIITVGNERFRCPEALFQPSFLGKEAAGVHRTTFDSIMKCDVDIRKDLYGNVVLSGGTTMYEGIGERLTKELTSLAPSTMKIKVVAPPERKYSVWIGGSILSSLSTFQQMWITKEEYDESGPSIVHRKCF</sequence>
<feature type="chain" id="PRO_0000089044" description="Actin">
    <location>
        <begin position="1"/>
        <end position="376"/>
    </location>
</feature>
<feature type="strand" evidence="10">
    <location>
        <begin position="9"/>
        <end position="13"/>
    </location>
</feature>
<feature type="strand" evidence="10">
    <location>
        <begin position="15"/>
        <end position="22"/>
    </location>
</feature>
<feature type="strand" evidence="10">
    <location>
        <begin position="29"/>
        <end position="33"/>
    </location>
</feature>
<feature type="strand" evidence="10">
    <location>
        <begin position="36"/>
        <end position="41"/>
    </location>
</feature>
<feature type="helix" evidence="10">
    <location>
        <begin position="57"/>
        <end position="61"/>
    </location>
</feature>
<feature type="helix" evidence="10">
    <location>
        <begin position="63"/>
        <end position="65"/>
    </location>
</feature>
<feature type="strand" evidence="10">
    <location>
        <begin position="66"/>
        <end position="69"/>
    </location>
</feature>
<feature type="strand" evidence="10">
    <location>
        <begin position="71"/>
        <end position="73"/>
    </location>
</feature>
<feature type="strand" evidence="11">
    <location>
        <begin position="76"/>
        <end position="78"/>
    </location>
</feature>
<feature type="helix" evidence="10">
    <location>
        <begin position="80"/>
        <end position="92"/>
    </location>
</feature>
<feature type="turn" evidence="10">
    <location>
        <begin position="99"/>
        <end position="101"/>
    </location>
</feature>
<feature type="strand" evidence="10">
    <location>
        <begin position="104"/>
        <end position="108"/>
    </location>
</feature>
<feature type="helix" evidence="10">
    <location>
        <begin position="114"/>
        <end position="126"/>
    </location>
</feature>
<feature type="strand" evidence="10">
    <location>
        <begin position="131"/>
        <end position="137"/>
    </location>
</feature>
<feature type="helix" evidence="10">
    <location>
        <begin position="138"/>
        <end position="145"/>
    </location>
</feature>
<feature type="strand" evidence="10">
    <location>
        <begin position="149"/>
        <end position="156"/>
    </location>
</feature>
<feature type="strand" evidence="10">
    <location>
        <begin position="161"/>
        <end position="167"/>
    </location>
</feature>
<feature type="helix" evidence="10">
    <location>
        <begin position="173"/>
        <end position="175"/>
    </location>
</feature>
<feature type="strand" evidence="10">
    <location>
        <begin position="177"/>
        <end position="179"/>
    </location>
</feature>
<feature type="helix" evidence="10">
    <location>
        <begin position="183"/>
        <end position="193"/>
    </location>
</feature>
<feature type="helix" evidence="10">
    <location>
        <begin position="194"/>
        <end position="197"/>
    </location>
</feature>
<feature type="helix" evidence="10">
    <location>
        <begin position="204"/>
        <end position="217"/>
    </location>
</feature>
<feature type="helix" evidence="10">
    <location>
        <begin position="224"/>
        <end position="231"/>
    </location>
</feature>
<feature type="strand" evidence="10">
    <location>
        <begin position="239"/>
        <end position="242"/>
    </location>
</feature>
<feature type="strand" evidence="10">
    <location>
        <begin position="248"/>
        <end position="252"/>
    </location>
</feature>
<feature type="helix" evidence="10">
    <location>
        <begin position="254"/>
        <end position="257"/>
    </location>
</feature>
<feature type="helix" evidence="10">
    <location>
        <begin position="259"/>
        <end position="262"/>
    </location>
</feature>
<feature type="helix" evidence="10">
    <location>
        <begin position="265"/>
        <end position="268"/>
    </location>
</feature>
<feature type="helix" evidence="10">
    <location>
        <begin position="275"/>
        <end position="284"/>
    </location>
</feature>
<feature type="turn" evidence="10">
    <location>
        <begin position="288"/>
        <end position="290"/>
    </location>
</feature>
<feature type="helix" evidence="10">
    <location>
        <begin position="291"/>
        <end position="296"/>
    </location>
</feature>
<feature type="strand" evidence="10">
    <location>
        <begin position="298"/>
        <end position="302"/>
    </location>
</feature>
<feature type="helix" evidence="10">
    <location>
        <begin position="303"/>
        <end position="305"/>
    </location>
</feature>
<feature type="helix" evidence="10">
    <location>
        <begin position="310"/>
        <end position="321"/>
    </location>
</feature>
<feature type="helix" evidence="10">
    <location>
        <begin position="336"/>
        <end position="338"/>
    </location>
</feature>
<feature type="helix" evidence="10">
    <location>
        <begin position="339"/>
        <end position="348"/>
    </location>
</feature>
<feature type="helix" evidence="10">
    <location>
        <begin position="352"/>
        <end position="355"/>
    </location>
</feature>
<feature type="helix" evidence="10">
    <location>
        <begin position="360"/>
        <end position="366"/>
    </location>
</feature>
<feature type="helix" evidence="10">
    <location>
        <begin position="370"/>
        <end position="374"/>
    </location>
</feature>
<reference key="1">
    <citation type="journal article" date="1997" name="Cell Motil. Cytoskeleton">
        <title>Actin in the parasite Toxoplasma gondii is encoded by a single copy gene, ACT1 and exists primarily in a globular form.</title>
        <authorList>
            <person name="Dobrowolski J.M."/>
            <person name="Niesman I.R."/>
            <person name="Sibley L.D."/>
        </authorList>
    </citation>
    <scope>NUCLEOTIDE SEQUENCE [GENOMIC DNA]</scope>
    <source>
        <strain>RH88</strain>
    </source>
</reference>
<reference key="2">
    <citation type="journal article" date="1997" name="Mol. Biochem. Parasitol.">
        <title>Cloning and characterization of actin depolymerizing factor from Toxoplasma gondii.</title>
        <authorList>
            <person name="Allen M.L."/>
            <person name="Dobrowolski J.M."/>
            <person name="Muller H."/>
            <person name="Sibley L.D."/>
            <person name="Mansour T.E."/>
        </authorList>
    </citation>
    <scope>INTERACTION WITH ADF</scope>
    <source>
        <strain evidence="8">RH</strain>
    </source>
</reference>
<reference key="3">
    <citation type="journal article" date="2003" name="Mol. Cell">
        <title>Aldolase forms a bridge between cell surface adhesins and the actin cytoskeleton in apicomplexan parasites.</title>
        <authorList>
            <person name="Jewett T.J."/>
            <person name="Sibley L.D."/>
        </authorList>
    </citation>
    <scope>IDENTIFICATION IN A COMPLEX WITH MIC2 AND ALD-1</scope>
    <source>
        <strain evidence="6">RH</strain>
    </source>
</reference>
<reference key="4">
    <citation type="journal article" date="2009" name="Cell Host Microbe">
        <title>Aldolase is essential for energy production and bridging adhesin-actin cytoskeletal interactions during parasite invasion of host cells.</title>
        <authorList>
            <person name="Starnes G.L."/>
            <person name="Coincon M."/>
            <person name="Sygusch J."/>
            <person name="Sibley L.D."/>
        </authorList>
    </citation>
    <scope>INTERACTION WITH ALD-1</scope>
</reference>
<reference key="5">
    <citation type="journal article" date="2010" name="J. Biol. Chem.">
        <title>Toxoplasma gondii actin depolymerizing factor acts primarily to sequester G-actin.</title>
        <authorList>
            <person name="Mehta S."/>
            <person name="Sibley L.D."/>
        </authorList>
    </citation>
    <scope>INTERACTION WITH ADF</scope>
    <source>
        <strain evidence="7">RH</strain>
    </source>
</reference>
<accession>P53476</accession>
<dbReference type="EC" id="3.6.4.-" evidence="1"/>
<dbReference type="EMBL" id="U10429">
    <property type="protein sequence ID" value="AAC13766.1"/>
    <property type="molecule type" value="Genomic_DNA"/>
</dbReference>
<dbReference type="PDB" id="8TRM">
    <property type="method" value="EM"/>
    <property type="resolution" value="2.50 A"/>
    <property type="chains" value="A/B/C=1-376"/>
</dbReference>
<dbReference type="PDB" id="8TRN">
    <property type="method" value="EM"/>
    <property type="resolution" value="3.00 A"/>
    <property type="chains" value="A/B/C=1-376"/>
</dbReference>
<dbReference type="PDBsum" id="8TRM"/>
<dbReference type="PDBsum" id="8TRN"/>
<dbReference type="EMDB" id="EMD-41583"/>
<dbReference type="EMDB" id="EMD-41584"/>
<dbReference type="SMR" id="P53476"/>
<dbReference type="ChEMBL" id="CHEMBL2424507"/>
<dbReference type="EnsemblProtists" id="TGME49_209030-t26_1">
    <property type="protein sequence ID" value="TGME49_209030-t26_1"/>
    <property type="gene ID" value="TGME49_209030"/>
</dbReference>
<dbReference type="VEuPathDB" id="ToxoDB:TGARI_209030"/>
<dbReference type="VEuPathDB" id="ToxoDB:TGCAST_209030"/>
<dbReference type="VEuPathDB" id="ToxoDB:TGCOUG_209030"/>
<dbReference type="VEuPathDB" id="ToxoDB:TGDOM2_209030"/>
<dbReference type="VEuPathDB" id="ToxoDB:TGFOU_209030"/>
<dbReference type="VEuPathDB" id="ToxoDB:TGGT1_209030"/>
<dbReference type="VEuPathDB" id="ToxoDB:TGMAS_209030"/>
<dbReference type="VEuPathDB" id="ToxoDB:TGME49_209030"/>
<dbReference type="VEuPathDB" id="ToxoDB:TGP89_209030"/>
<dbReference type="VEuPathDB" id="ToxoDB:TGPRC2_209030"/>
<dbReference type="VEuPathDB" id="ToxoDB:TGRH88_022080"/>
<dbReference type="VEuPathDB" id="ToxoDB:TGRUB_209030"/>
<dbReference type="VEuPathDB" id="ToxoDB:TGVAND_209030"/>
<dbReference type="VEuPathDB" id="ToxoDB:TGVEG_209030"/>
<dbReference type="OMA" id="FHTTAER"/>
<dbReference type="GO" id="GO:0005737">
    <property type="term" value="C:cytoplasm"/>
    <property type="evidence" value="ECO:0007669"/>
    <property type="project" value="UniProtKB-KW"/>
</dbReference>
<dbReference type="GO" id="GO:0005856">
    <property type="term" value="C:cytoskeleton"/>
    <property type="evidence" value="ECO:0007669"/>
    <property type="project" value="UniProtKB-SubCell"/>
</dbReference>
<dbReference type="GO" id="GO:0005524">
    <property type="term" value="F:ATP binding"/>
    <property type="evidence" value="ECO:0007669"/>
    <property type="project" value="UniProtKB-KW"/>
</dbReference>
<dbReference type="GO" id="GO:0016787">
    <property type="term" value="F:hydrolase activity"/>
    <property type="evidence" value="ECO:0007669"/>
    <property type="project" value="UniProtKB-KW"/>
</dbReference>
<dbReference type="CDD" id="cd10224">
    <property type="entry name" value="ASKHA_NBD_actin"/>
    <property type="match status" value="1"/>
</dbReference>
<dbReference type="FunFam" id="2.30.36.70:FF:000001">
    <property type="entry name" value="Actin, alpha skeletal muscle"/>
    <property type="match status" value="1"/>
</dbReference>
<dbReference type="FunFam" id="3.30.420.40:FF:000050">
    <property type="entry name" value="Actin, alpha skeletal muscle"/>
    <property type="match status" value="1"/>
</dbReference>
<dbReference type="FunFam" id="3.30.420.40:FF:000205">
    <property type="entry name" value="Actin, alpha skeletal muscle"/>
    <property type="match status" value="1"/>
</dbReference>
<dbReference type="FunFam" id="3.90.640.10:FF:000001">
    <property type="entry name" value="Actin, muscle"/>
    <property type="match status" value="1"/>
</dbReference>
<dbReference type="FunFam" id="3.30.420.40:FF:000404">
    <property type="entry name" value="Major actin"/>
    <property type="match status" value="1"/>
</dbReference>
<dbReference type="FunFam" id="3.30.420.40:FF:000058">
    <property type="entry name" value="Putative actin-related protein 5"/>
    <property type="match status" value="1"/>
</dbReference>
<dbReference type="Gene3D" id="3.30.420.40">
    <property type="match status" value="2"/>
</dbReference>
<dbReference type="Gene3D" id="3.90.640.10">
    <property type="entry name" value="Actin, Chain A, domain 4"/>
    <property type="match status" value="1"/>
</dbReference>
<dbReference type="InterPro" id="IPR004000">
    <property type="entry name" value="Actin"/>
</dbReference>
<dbReference type="InterPro" id="IPR020902">
    <property type="entry name" value="Actin/actin-like_CS"/>
</dbReference>
<dbReference type="InterPro" id="IPR004001">
    <property type="entry name" value="Actin_CS"/>
</dbReference>
<dbReference type="InterPro" id="IPR043129">
    <property type="entry name" value="ATPase_NBD"/>
</dbReference>
<dbReference type="PANTHER" id="PTHR11937">
    <property type="entry name" value="ACTIN"/>
    <property type="match status" value="1"/>
</dbReference>
<dbReference type="Pfam" id="PF00022">
    <property type="entry name" value="Actin"/>
    <property type="match status" value="1"/>
</dbReference>
<dbReference type="PRINTS" id="PR00190">
    <property type="entry name" value="ACTIN"/>
</dbReference>
<dbReference type="SMART" id="SM00268">
    <property type="entry name" value="ACTIN"/>
    <property type="match status" value="1"/>
</dbReference>
<dbReference type="SUPFAM" id="SSF53067">
    <property type="entry name" value="Actin-like ATPase domain"/>
    <property type="match status" value="2"/>
</dbReference>
<dbReference type="PROSITE" id="PS00406">
    <property type="entry name" value="ACTINS_1"/>
    <property type="match status" value="1"/>
</dbReference>
<dbReference type="PROSITE" id="PS00432">
    <property type="entry name" value="ACTINS_2"/>
    <property type="match status" value="1"/>
</dbReference>
<dbReference type="PROSITE" id="PS01132">
    <property type="entry name" value="ACTINS_ACT_LIKE"/>
    <property type="match status" value="1"/>
</dbReference>
<keyword id="KW-0002">3D-structure</keyword>
<keyword id="KW-0067">ATP-binding</keyword>
<keyword id="KW-0963">Cytoplasm</keyword>
<keyword id="KW-0206">Cytoskeleton</keyword>
<keyword id="KW-0378">Hydrolase</keyword>
<keyword id="KW-0547">Nucleotide-binding</keyword>